<comment type="similarity">
    <text evidence="1">Belongs to the universal ribosomal protein uL29 family.</text>
</comment>
<accession>A5FRY3</accession>
<name>RL29_DEHMB</name>
<dbReference type="EMBL" id="CP000688">
    <property type="protein sequence ID" value="ABQ17044.1"/>
    <property type="molecule type" value="Genomic_DNA"/>
</dbReference>
<dbReference type="SMR" id="A5FRY3"/>
<dbReference type="KEGG" id="deb:DehaBAV1_0459"/>
<dbReference type="PATRIC" id="fig|216389.18.peg.502"/>
<dbReference type="HOGENOM" id="CLU_158491_3_3_0"/>
<dbReference type="GO" id="GO:0022625">
    <property type="term" value="C:cytosolic large ribosomal subunit"/>
    <property type="evidence" value="ECO:0007669"/>
    <property type="project" value="TreeGrafter"/>
</dbReference>
<dbReference type="GO" id="GO:0003735">
    <property type="term" value="F:structural constituent of ribosome"/>
    <property type="evidence" value="ECO:0007669"/>
    <property type="project" value="InterPro"/>
</dbReference>
<dbReference type="GO" id="GO:0006412">
    <property type="term" value="P:translation"/>
    <property type="evidence" value="ECO:0007669"/>
    <property type="project" value="UniProtKB-UniRule"/>
</dbReference>
<dbReference type="CDD" id="cd00427">
    <property type="entry name" value="Ribosomal_L29_HIP"/>
    <property type="match status" value="1"/>
</dbReference>
<dbReference type="FunFam" id="1.10.287.310:FF:000001">
    <property type="entry name" value="50S ribosomal protein L29"/>
    <property type="match status" value="1"/>
</dbReference>
<dbReference type="Gene3D" id="1.10.287.310">
    <property type="match status" value="1"/>
</dbReference>
<dbReference type="HAMAP" id="MF_00374">
    <property type="entry name" value="Ribosomal_uL29"/>
    <property type="match status" value="1"/>
</dbReference>
<dbReference type="InterPro" id="IPR050063">
    <property type="entry name" value="Ribosomal_protein_uL29"/>
</dbReference>
<dbReference type="InterPro" id="IPR001854">
    <property type="entry name" value="Ribosomal_uL29"/>
</dbReference>
<dbReference type="InterPro" id="IPR036049">
    <property type="entry name" value="Ribosomal_uL29_sf"/>
</dbReference>
<dbReference type="NCBIfam" id="TIGR00012">
    <property type="entry name" value="L29"/>
    <property type="match status" value="1"/>
</dbReference>
<dbReference type="PANTHER" id="PTHR10916">
    <property type="entry name" value="60S RIBOSOMAL PROTEIN L35/50S RIBOSOMAL PROTEIN L29"/>
    <property type="match status" value="1"/>
</dbReference>
<dbReference type="PANTHER" id="PTHR10916:SF0">
    <property type="entry name" value="LARGE RIBOSOMAL SUBUNIT PROTEIN UL29C"/>
    <property type="match status" value="1"/>
</dbReference>
<dbReference type="Pfam" id="PF00831">
    <property type="entry name" value="Ribosomal_L29"/>
    <property type="match status" value="1"/>
</dbReference>
<dbReference type="SUPFAM" id="SSF46561">
    <property type="entry name" value="Ribosomal protein L29 (L29p)"/>
    <property type="match status" value="1"/>
</dbReference>
<proteinExistence type="inferred from homology"/>
<reference key="1">
    <citation type="submission" date="2007-05" db="EMBL/GenBank/DDBJ databases">
        <title>Complete sequence of Dehalococcoides sp. BAV1.</title>
        <authorList>
            <consortium name="US DOE Joint Genome Institute"/>
            <person name="Copeland A."/>
            <person name="Lucas S."/>
            <person name="Lapidus A."/>
            <person name="Barry K."/>
            <person name="Detter J.C."/>
            <person name="Glavina del Rio T."/>
            <person name="Hammon N."/>
            <person name="Israni S."/>
            <person name="Pitluck S."/>
            <person name="Lowry S."/>
            <person name="Clum A."/>
            <person name="Schmutz J."/>
            <person name="Larimer F."/>
            <person name="Land M."/>
            <person name="Hauser L."/>
            <person name="Kyrpides N."/>
            <person name="Kim E."/>
            <person name="Ritalahti K.M."/>
            <person name="Loeffler F."/>
            <person name="Richardson P."/>
        </authorList>
    </citation>
    <scope>NUCLEOTIDE SEQUENCE [LARGE SCALE GENOMIC DNA]</scope>
    <source>
        <strain>ATCC BAA-2100 / JCM 16839 / KCTC 5957 / BAV1</strain>
    </source>
</reference>
<evidence type="ECO:0000255" key="1">
    <source>
        <dbReference type="HAMAP-Rule" id="MF_00374"/>
    </source>
</evidence>
<evidence type="ECO:0000305" key="2"/>
<protein>
    <recommendedName>
        <fullName evidence="1">Large ribosomal subunit protein uL29</fullName>
    </recommendedName>
    <alternativeName>
        <fullName evidence="2">50S ribosomal protein L29</fullName>
    </alternativeName>
</protein>
<sequence>MNISDIRGLSDTEIKKKLEDSHKELFELRLKLSTRQLVNHRELPRVKNDIARILTVMRERELQIR</sequence>
<keyword id="KW-0687">Ribonucleoprotein</keyword>
<keyword id="KW-0689">Ribosomal protein</keyword>
<gene>
    <name evidence="1" type="primary">rpmC</name>
    <name type="ordered locus">DehaBAV1_0459</name>
</gene>
<feature type="chain" id="PRO_1000079883" description="Large ribosomal subunit protein uL29">
    <location>
        <begin position="1"/>
        <end position="65"/>
    </location>
</feature>
<organism>
    <name type="scientific">Dehalococcoides mccartyi (strain ATCC BAA-2100 / JCM 16839 / KCTC 5957 / BAV1)</name>
    <dbReference type="NCBI Taxonomy" id="216389"/>
    <lineage>
        <taxon>Bacteria</taxon>
        <taxon>Bacillati</taxon>
        <taxon>Chloroflexota</taxon>
        <taxon>Dehalococcoidia</taxon>
        <taxon>Dehalococcoidales</taxon>
        <taxon>Dehalococcoidaceae</taxon>
        <taxon>Dehalococcoides</taxon>
    </lineage>
</organism>